<name>IL1B_TRIVU</name>
<accession>Q9XS77</accession>
<protein>
    <recommendedName>
        <fullName>Interleukin-1 beta</fullName>
        <shortName>IL-1 beta</shortName>
    </recommendedName>
</protein>
<reference key="1">
    <citation type="journal article" date="1999" name="Vet. Immunol. Immunopathol.">
        <title>Molecular cloning and physiological effects of brushtail possum interleukin-1beta.</title>
        <authorList>
            <person name="Wedlock D.N."/>
            <person name="Goh L.P."/>
            <person name="Parlane N.A."/>
            <person name="Buddle B.M."/>
        </authorList>
    </citation>
    <scope>NUCLEOTIDE SEQUENCE [MRNA]</scope>
</reference>
<organism>
    <name type="scientific">Trichosurus vulpecula</name>
    <name type="common">Brush-tailed possum</name>
    <dbReference type="NCBI Taxonomy" id="9337"/>
    <lineage>
        <taxon>Eukaryota</taxon>
        <taxon>Metazoa</taxon>
        <taxon>Chordata</taxon>
        <taxon>Craniata</taxon>
        <taxon>Vertebrata</taxon>
        <taxon>Euteleostomi</taxon>
        <taxon>Mammalia</taxon>
        <taxon>Metatheria</taxon>
        <taxon>Diprotodontia</taxon>
        <taxon>Phalangeridae</taxon>
        <taxon>Trichosurus</taxon>
    </lineage>
</organism>
<sequence length="269" mass="31141">MAMVPEITCDEVDFYRDDDDRQFYEADGPNQKKGYFQYPDLCSKESLLEEDGIQLKFTTQPHQFHQTVMVIVAIEKMKHLNGLSSQFFQDNDLMNIFTNIFQEEPITFKNCDIYESDSSFRLVSSQDCTIQDINQKCLALSKASELRALHLNGRNISQQVIFSMKYLLGDIGSQKTHVVLCIKKNNLYLSCVRRGEKPILQLEQIANFPSINVEKRFIFNKVEINNTTEFESAEYPNWYISTSQMDEQPVFLGNIRGGKDITDFILADF</sequence>
<comment type="function">
    <text evidence="2">Potent pro-inflammatory cytokine. Initially discovered as the major endogenous pyrogen, induces prostaglandin synthesis, neutrophil influx and activation, T-cell activation and cytokine production, B-cell activation and antibody production, and fibroblast proliferation and collagen production. Promotes Th17 differentiation of T-cells. Synergizes with IL12/interleukin-12 to induce IFNG synthesis from T-helper 1 (Th1) cells. Plays a role in angiogenesis by inducing VEGF production synergistically with TNF and IL6. Involved in transduction of inflammation downstream of pyroptosis: its mature form is specifically released in the extracellular milieu by passing through the gasdermin-D (GSDMD) pore.</text>
</comment>
<comment type="subunit">
    <text evidence="2">Monomer. In its precursor form, weakly interacts with full-length MEFV; the mature cytokine does not interact at all. Interacts with integrins ITGAV:ITGBV and ITGA5:ITGB1; integrin-binding is required for IL1B signaling. Interacts with cargo receptor TMED10; the interaction is direct and is required for the secretion of IL1B mature form. Interacts with HSP90AB1; the interaction facilitates cargo translocation into the ERGIC. Interacts with HSP90B1; the interaction facilitates cargo translocation into the ERGIC.</text>
</comment>
<comment type="subcellular location">
    <subcellularLocation>
        <location evidence="2">Cytoplasm</location>
        <location evidence="2">Cytosol</location>
    </subcellularLocation>
    <subcellularLocation>
        <location evidence="2">Secreted</location>
    </subcellularLocation>
    <subcellularLocation>
        <location evidence="2">Lysosome</location>
    </subcellularLocation>
    <subcellularLocation>
        <location evidence="3">Secreted</location>
        <location evidence="3">Extracellular exosome</location>
    </subcellularLocation>
    <text evidence="2">The precursor is cytosolic. In response to inflammasome-activating signals, such as ATP for NLRP3 inflammasome or bacterial flagellin for NLRC4 inflammasome, cleaved and secreted. Mature form is secreted and released in the extracellular milieu by passing through the gasdermin-D (GSDMD) pore. In contrast, the precursor form is not released, due to the presence of an acidic region that is proteolytically removed by CASP1 during maturation. The secretion is dependent on protein unfolding and facilitated by the cargo receptor TMED10.</text>
</comment>
<comment type="miscellaneous">
    <text evidence="1">IL1B production occurs in 2 steps, each being controlled by different stimuli. First, inflammatory signals, such as LPS, stimulate the synthesis and promote the accumulation of cytosolic stores of pro-IL1B (priming). Then additional signals are required for inflammasome assembly, leading to CASP1 activation, pro-IL1B processing and eventually secretion of the active cytokine. IL1B processing and secretion are temporarily associated.</text>
</comment>
<comment type="similarity">
    <text evidence="4">Belongs to the IL-1 family.</text>
</comment>
<dbReference type="EMBL" id="AF071539">
    <property type="protein sequence ID" value="AAD21871.1"/>
    <property type="molecule type" value="mRNA"/>
</dbReference>
<dbReference type="RefSeq" id="XP_036608102.1">
    <property type="nucleotide sequence ID" value="XM_036752207.1"/>
</dbReference>
<dbReference type="SMR" id="Q9XS77"/>
<dbReference type="GeneID" id="118844336"/>
<dbReference type="OrthoDB" id="9449069at2759"/>
<dbReference type="GO" id="GO:0005829">
    <property type="term" value="C:cytosol"/>
    <property type="evidence" value="ECO:0007669"/>
    <property type="project" value="UniProtKB-SubCell"/>
</dbReference>
<dbReference type="GO" id="GO:0005615">
    <property type="term" value="C:extracellular space"/>
    <property type="evidence" value="ECO:0007669"/>
    <property type="project" value="UniProtKB-KW"/>
</dbReference>
<dbReference type="GO" id="GO:0005764">
    <property type="term" value="C:lysosome"/>
    <property type="evidence" value="ECO:0007669"/>
    <property type="project" value="UniProtKB-SubCell"/>
</dbReference>
<dbReference type="GO" id="GO:0005125">
    <property type="term" value="F:cytokine activity"/>
    <property type="evidence" value="ECO:0007669"/>
    <property type="project" value="UniProtKB-KW"/>
</dbReference>
<dbReference type="GO" id="GO:0005178">
    <property type="term" value="F:integrin binding"/>
    <property type="evidence" value="ECO:0000250"/>
    <property type="project" value="UniProtKB"/>
</dbReference>
<dbReference type="GO" id="GO:0005149">
    <property type="term" value="F:interleukin-1 receptor binding"/>
    <property type="evidence" value="ECO:0007669"/>
    <property type="project" value="InterPro"/>
</dbReference>
<dbReference type="GO" id="GO:0071222">
    <property type="term" value="P:cellular response to lipopolysaccharide"/>
    <property type="evidence" value="ECO:0007669"/>
    <property type="project" value="TreeGrafter"/>
</dbReference>
<dbReference type="GO" id="GO:0019221">
    <property type="term" value="P:cytokine-mediated signaling pathway"/>
    <property type="evidence" value="ECO:0007669"/>
    <property type="project" value="TreeGrafter"/>
</dbReference>
<dbReference type="GO" id="GO:0001660">
    <property type="term" value="P:fever generation"/>
    <property type="evidence" value="ECO:0007669"/>
    <property type="project" value="UniProtKB-KW"/>
</dbReference>
<dbReference type="GO" id="GO:0006955">
    <property type="term" value="P:immune response"/>
    <property type="evidence" value="ECO:0007669"/>
    <property type="project" value="InterPro"/>
</dbReference>
<dbReference type="GO" id="GO:0051781">
    <property type="term" value="P:positive regulation of cell division"/>
    <property type="evidence" value="ECO:0007669"/>
    <property type="project" value="UniProtKB-KW"/>
</dbReference>
<dbReference type="GO" id="GO:0033092">
    <property type="term" value="P:positive regulation of immature T cell proliferation in thymus"/>
    <property type="evidence" value="ECO:0007669"/>
    <property type="project" value="TreeGrafter"/>
</dbReference>
<dbReference type="GO" id="GO:2000556">
    <property type="term" value="P:positive regulation of T-helper 1 cell cytokine production"/>
    <property type="evidence" value="ECO:0000250"/>
    <property type="project" value="UniProtKB"/>
</dbReference>
<dbReference type="GO" id="GO:0032729">
    <property type="term" value="P:positive regulation of type II interferon production"/>
    <property type="evidence" value="ECO:0000250"/>
    <property type="project" value="UniProtKB"/>
</dbReference>
<dbReference type="GO" id="GO:0010573">
    <property type="term" value="P:vascular endothelial growth factor production"/>
    <property type="evidence" value="ECO:0000250"/>
    <property type="project" value="UniProtKB"/>
</dbReference>
<dbReference type="CDD" id="cd23296">
    <property type="entry name" value="beta-trefoil_IL1B"/>
    <property type="match status" value="1"/>
</dbReference>
<dbReference type="FunFam" id="2.80.10.50:FF:000027">
    <property type="entry name" value="Interleukin-1 beta"/>
    <property type="match status" value="1"/>
</dbReference>
<dbReference type="Gene3D" id="2.80.10.50">
    <property type="match status" value="1"/>
</dbReference>
<dbReference type="InterPro" id="IPR020877">
    <property type="entry name" value="IL-1_CS"/>
</dbReference>
<dbReference type="InterPro" id="IPR000975">
    <property type="entry name" value="IL-1_fam"/>
</dbReference>
<dbReference type="InterPro" id="IPR003502">
    <property type="entry name" value="IL-1_propep"/>
</dbReference>
<dbReference type="InterPro" id="IPR008996">
    <property type="entry name" value="IL1/FGF"/>
</dbReference>
<dbReference type="PANTHER" id="PTHR10078:SF30">
    <property type="entry name" value="INTERLEUKIN-1 BETA"/>
    <property type="match status" value="1"/>
</dbReference>
<dbReference type="PANTHER" id="PTHR10078">
    <property type="entry name" value="INTERLEUKIN-1 FAMILY MEMBER"/>
    <property type="match status" value="1"/>
</dbReference>
<dbReference type="Pfam" id="PF00340">
    <property type="entry name" value="IL1"/>
    <property type="match status" value="1"/>
</dbReference>
<dbReference type="Pfam" id="PF02394">
    <property type="entry name" value="IL1_propep"/>
    <property type="match status" value="1"/>
</dbReference>
<dbReference type="PRINTS" id="PR00264">
    <property type="entry name" value="INTERLEUKIN1"/>
</dbReference>
<dbReference type="PRINTS" id="PR01359">
    <property type="entry name" value="INTRLEUKIN1B"/>
</dbReference>
<dbReference type="PRINTS" id="PR01357">
    <property type="entry name" value="INTRLEUKN1AB"/>
</dbReference>
<dbReference type="SMART" id="SM00125">
    <property type="entry name" value="IL1"/>
    <property type="match status" value="1"/>
</dbReference>
<dbReference type="SUPFAM" id="SSF50353">
    <property type="entry name" value="Cytokine"/>
    <property type="match status" value="1"/>
</dbReference>
<dbReference type="PROSITE" id="PS00253">
    <property type="entry name" value="INTERLEUKIN_1"/>
    <property type="match status" value="1"/>
</dbReference>
<feature type="propeptide" id="PRO_0000015321" evidence="1">
    <location>
        <begin position="1"/>
        <end position="112"/>
    </location>
</feature>
<feature type="chain" id="PRO_0000015322" description="Interleukin-1 beta">
    <location>
        <begin position="113"/>
        <end position="269"/>
    </location>
</feature>
<feature type="site" description="Important for interaction with integrin" evidence="2">
    <location>
        <position position="175"/>
    </location>
</feature>
<feature type="site" description="Important for interaction with integrin" evidence="2">
    <location>
        <position position="183"/>
    </location>
</feature>
<proteinExistence type="evidence at transcript level"/>
<evidence type="ECO:0000250" key="1"/>
<evidence type="ECO:0000250" key="2">
    <source>
        <dbReference type="UniProtKB" id="P01584"/>
    </source>
</evidence>
<evidence type="ECO:0000250" key="3">
    <source>
        <dbReference type="UniProtKB" id="P10749"/>
    </source>
</evidence>
<evidence type="ECO:0000305" key="4"/>
<gene>
    <name type="primary">IL1B</name>
</gene>
<keyword id="KW-0202">Cytokine</keyword>
<keyword id="KW-0963">Cytoplasm</keyword>
<keyword id="KW-0395">Inflammatory response</keyword>
<keyword id="KW-0458">Lysosome</keyword>
<keyword id="KW-0497">Mitogen</keyword>
<keyword id="KW-0666">Pyrogen</keyword>
<keyword id="KW-0964">Secreted</keyword>